<organism>
    <name type="scientific">Mus musculus</name>
    <name type="common">Mouse</name>
    <dbReference type="NCBI Taxonomy" id="10090"/>
    <lineage>
        <taxon>Eukaryota</taxon>
        <taxon>Metazoa</taxon>
        <taxon>Chordata</taxon>
        <taxon>Craniata</taxon>
        <taxon>Vertebrata</taxon>
        <taxon>Euteleostomi</taxon>
        <taxon>Mammalia</taxon>
        <taxon>Eutheria</taxon>
        <taxon>Euarchontoglires</taxon>
        <taxon>Glires</taxon>
        <taxon>Rodentia</taxon>
        <taxon>Myomorpha</taxon>
        <taxon>Muroidea</taxon>
        <taxon>Muridae</taxon>
        <taxon>Murinae</taxon>
        <taxon>Mus</taxon>
        <taxon>Mus</taxon>
    </lineage>
</organism>
<name>ACHA4_MOUSE</name>
<proteinExistence type="evidence at protein level"/>
<comment type="function">
    <text evidence="4 8">Component of neuronal acetylcholine receptors (nAChRs) that function as pentameric, ligand-gated cation channels with high calcium permeability among other activities. nAChRs are excitatory neurotrasnmitter receptors formed by a collection of nAChR subunits known to mediate synaptic transmission in the nervous system and the neuromuscular junction. Each nAchR subunit confers differential attributes to channel properties, including activation, deactivation and desensitization kinetics, pH sensitivity, cation permeability, and binding to allosteric modulators. CHRNA4 forms heteropentameric neuronal acetylcholine receptors with CHRNB2 and CHRNB4, as well as CHRNA5 and CHRNB3 as accesory subunits. Is the most abundant nAChR subtype expressed in the central nervous system (By similarity). Found in two major stoichiometric forms,(CHRNA4)3:(CHRNB2)2 and (CHRNA4)2:(CHRNB2)3, the two stoichiometric forms differ in their unitary conductance, calcium permeability, ACh sensitivity and potentiation by divalent cation (By similarity). Involved in the modulation of calcium-dependent signaling pathways, influences the release of neurotransmitters, including dopamine, glutamate and GABA (PubMed:12944511).</text>
</comment>
<comment type="catalytic activity">
    <reaction evidence="1">
        <text>K(+)(in) = K(+)(out)</text>
        <dbReference type="Rhea" id="RHEA:29463"/>
        <dbReference type="ChEBI" id="CHEBI:29103"/>
    </reaction>
</comment>
<comment type="catalytic activity">
    <reaction evidence="4">
        <text>Na(+)(in) = Na(+)(out)</text>
        <dbReference type="Rhea" id="RHEA:34963"/>
        <dbReference type="ChEBI" id="CHEBI:29101"/>
    </reaction>
</comment>
<comment type="catalytic activity">
    <reaction evidence="4">
        <text>Ca(2+)(in) = Ca(2+)(out)</text>
        <dbReference type="Rhea" id="RHEA:29671"/>
        <dbReference type="ChEBI" id="CHEBI:29108"/>
    </reaction>
</comment>
<comment type="activity regulation">
    <text evidence="8">Activated by a myriad of ligands such as acetylcholine, cytisine, nicotine, choline and epibatidine. Channel potentiation by calcium is stoichiometry-selective, CHRNA4:CHRNB2 nACh receptor is achieved by calcium association with topographically distinct sites framed by anionic residues within the CHRNA4 subunit and between the CHRNA4 and CHRNB2 subunits (PubMed:12944511). nAChR activity is inhibited by the antagonist alpha-conotoxins BuIA, PnIA, GID and MII, small disulfide-constrained peptides from cone snails (PubMed:12944511).</text>
</comment>
<comment type="subunit">
    <text evidence="3 4 8">Neuronal AChR is composed of two different types of subunits: alpha and beta. CHRNA4 forms heteropentameric neuronal acetylcholine receptors with CHRNB2 and CHRNB4, as well as CHRNA5 and CHRNB3 as accesory subunits (By similarity). Found in two major stoichiometric forms, LS (low agonist sensitivity): (CHRNA4)3:(CHRNB2)2 and HS (high agonist sensitivity): (CHRNA4)2:(CHRNB2)3, the two stoichiometric forms differ in their unitary conductance, calcium permeability, ACh sensitivity and potentiation by divalent cation. Cells produce predominantly an (CHRNA4)3:(CHRNB2)2 nAChR. The (CHRNA4)2:(CHRNB2)3 expression is selectively up-regulated by nicotine and has lower single channel conductance and calcium permeability (By similarity). In the striatum, also forms CHRNA4:CHRNA6:CHRNB2 complexes (PubMed:12944511). Also found in the stoichiometric form: (CHRNA4:CHRNB2)2:CHRNB3 (By similarity). Interacts with RIC3; which is required for proper folding and assembly. Interacts with LYPD6 (By similarity).</text>
</comment>
<comment type="interaction">
    <interactant intactId="EBI-10916203">
        <id>O70174</id>
    </interactant>
    <interactant intactId="EBI-14035010">
        <id>Q8BLC3</id>
        <label>Lypd1</label>
    </interactant>
    <organismsDiffer>false</organismsDiffer>
    <experiments>3</experiments>
</comment>
<comment type="subcellular location">
    <subcellularLocation>
        <location evidence="10">Synaptic cell membrane</location>
        <topology evidence="5">Multi-pass membrane protein</topology>
    </subcellularLocation>
    <subcellularLocation>
        <location evidence="10">Cell membrane</location>
        <topology evidence="5">Multi-pass membrane protein</topology>
    </subcellularLocation>
</comment>
<comment type="similarity">
    <text evidence="9">Belongs to the ligand-gated ion channel (TC 1.A.9) family. Acetylcholine receptor (TC 1.A.9.1) subfamily. Alpha-4/CHRNA4 sub-subfamily.</text>
</comment>
<gene>
    <name type="primary">Chrna4</name>
    <name type="synonym">Acra4</name>
</gene>
<feature type="signal peptide" evidence="5">
    <location>
        <begin position="1"/>
        <end position="30"/>
    </location>
</feature>
<feature type="chain" id="PRO_0000000352" description="Neuronal acetylcholine receptor subunit alpha-4">
    <location>
        <begin position="31"/>
        <end position="629"/>
    </location>
</feature>
<feature type="topological domain" description="Extracellular" evidence="5">
    <location>
        <begin position="32"/>
        <end position="249"/>
    </location>
</feature>
<feature type="transmembrane region" description="Helical" evidence="5">
    <location>
        <begin position="250"/>
        <end position="270"/>
    </location>
</feature>
<feature type="transmembrane region" description="Helical" evidence="5">
    <location>
        <begin position="279"/>
        <end position="299"/>
    </location>
</feature>
<feature type="transmembrane region" description="Helical" evidence="5">
    <location>
        <begin position="312"/>
        <end position="332"/>
    </location>
</feature>
<feature type="topological domain" description="Cytoplasmic" evidence="5">
    <location>
        <begin position="333"/>
        <end position="603"/>
    </location>
</feature>
<feature type="transmembrane region" description="Helical" evidence="5">
    <location>
        <begin position="604"/>
        <end position="624"/>
    </location>
</feature>
<feature type="region of interest" description="Disordered" evidence="6">
    <location>
        <begin position="420"/>
        <end position="459"/>
    </location>
</feature>
<feature type="region of interest" description="Disordered" evidence="6">
    <location>
        <begin position="503"/>
        <end position="529"/>
    </location>
</feature>
<feature type="compositionally biased region" description="Basic and acidic residues" evidence="6">
    <location>
        <begin position="431"/>
        <end position="442"/>
    </location>
</feature>
<feature type="compositionally biased region" description="Low complexity" evidence="6">
    <location>
        <begin position="449"/>
        <end position="459"/>
    </location>
</feature>
<feature type="compositionally biased region" description="Polar residues" evidence="6">
    <location>
        <begin position="504"/>
        <end position="529"/>
    </location>
</feature>
<feature type="binding site" evidence="4">
    <location>
        <position position="78"/>
    </location>
    <ligand>
        <name>Ca(2+)</name>
        <dbReference type="ChEBI" id="CHEBI:29108"/>
    </ligand>
</feature>
<feature type="binding site" evidence="4">
    <location>
        <position position="80"/>
    </location>
    <ligand>
        <name>Ca(2+)</name>
        <dbReference type="ChEBI" id="CHEBI:29108"/>
    </ligand>
</feature>
<feature type="modified residue" description="Phosphoserine" evidence="3">
    <location>
        <position position="427"/>
    </location>
</feature>
<feature type="modified residue" description="Phosphoserine" evidence="11">
    <location>
        <position position="540"/>
    </location>
</feature>
<feature type="modified residue" description="Phosphoserine" evidence="11">
    <location>
        <position position="543"/>
    </location>
</feature>
<feature type="lipid moiety-binding region" description="S-palmitoyl cysteine" evidence="2">
    <location>
        <position position="273"/>
    </location>
</feature>
<feature type="glycosylation site" description="N-linked (GlcNAc...) asparagine" evidence="5">
    <location>
        <position position="59"/>
    </location>
</feature>
<feature type="glycosylation site" description="N-linked (GlcNAc...) asparagine" evidence="5">
    <location>
        <position position="109"/>
    </location>
</feature>
<feature type="glycosylation site" description="N-linked (GlcNAc...) asparagine" evidence="5">
    <location>
        <position position="176"/>
    </location>
</feature>
<feature type="disulfide bond" evidence="4">
    <location>
        <begin position="163"/>
        <end position="177"/>
    </location>
</feature>
<feature type="disulfide bond" description="Associated with receptor activation" evidence="4">
    <location>
        <begin position="227"/>
        <end position="228"/>
    </location>
</feature>
<feature type="sequence variant" evidence="7">
    <original>T</original>
    <variation>A</variation>
    <location>
        <position position="529"/>
    </location>
</feature>
<feature type="sequence conflict" description="In Ref. 1; AAF34716." evidence="9" ref="1">
    <original>P</original>
    <variation>L</variation>
    <location>
        <position position="16"/>
    </location>
</feature>
<feature type="sequence conflict" description="In Ref. 4; BAA25752." evidence="9" ref="4">
    <original>G</original>
    <variation>A</variation>
    <location>
        <position position="24"/>
    </location>
</feature>
<feature type="sequence conflict" description="In Ref. 1; AAF34716." evidence="9" ref="1">
    <original>D</original>
    <variation>N</variation>
    <location>
        <position position="134"/>
    </location>
</feature>
<sequence length="629" mass="70305">MEIGGSGAPPPLLLLPLLLLLGTGLLPASSHIETRAHAEERLLKRLFSGYNKWSRPVANISDVVLVRFGLSIAQLIDVDEKNQMMTTNVWVKQEWHDYKLRWDPGDYENVTSIRIPSELIWRPDIVLYNNADGDFAVTHLTKAHLFYDGRVQWTPPAIYKSSCSIDVTFFPFDQQNCTMKFGSWTYDKAKIDLVSMHSRVDQLDFWESGEWVIVDAVGTYNTRKYECCAEIYPDITYAFIIRRLPLFYTINLIIPCLLISCLTVLVFYLPSECGEKVTLCISVLLSLTVFLLLITEIIPSTSLVIPLIGEYLLFTMIFVTLSIVITVFVLNVHHRSPRTHTMPAWVRRVFLDIVPRLLFMKRPSVVKDNCRRLIESMHKMANAPRFWPEPESEPGILGDICNQGLSPAPTFCNRMDTAVETQPTCRSPSHKVPDLKTSEVEKASPCPSPGSCHPPNSSGAPVLIKARSLSVQHVPSSQEAAEGSIRCRSRSIQYCVSQDGAASLTESKPTGSPASLKTRPSQLPVSDQTSPCKCTCKEPSPVSPITVLKAGGTKAPPQHLPLSPALTRAVEGVQYIADHLKAEDTDFSVKEDWKYVAMVIDRIFLWMFIIVCLLGTVGLFLPPWLAGMI</sequence>
<accession>O70174</accession>
<accession>Q8BHE9</accession>
<accession>Q8VI10</accession>
<accession>Q9ET51</accession>
<dbReference type="EMBL" id="AF225912">
    <property type="protein sequence ID" value="AAF34716.2"/>
    <property type="molecule type" value="mRNA"/>
</dbReference>
<dbReference type="EMBL" id="AK034228">
    <property type="protein sequence ID" value="BAC28638.1"/>
    <property type="molecule type" value="mRNA"/>
</dbReference>
<dbReference type="EMBL" id="AK083157">
    <property type="protein sequence ID" value="BAC38788.1"/>
    <property type="molecule type" value="mRNA"/>
</dbReference>
<dbReference type="EMBL" id="BC053013">
    <property type="protein sequence ID" value="AAH53013.1"/>
    <property type="molecule type" value="mRNA"/>
</dbReference>
<dbReference type="EMBL" id="AB010002">
    <property type="protein sequence ID" value="BAA25752.1"/>
    <property type="molecule type" value="Genomic_DNA"/>
</dbReference>
<dbReference type="EMBL" id="AF325347">
    <property type="protein sequence ID" value="AAL37363.1"/>
    <property type="molecule type" value="mRNA"/>
</dbReference>
<dbReference type="CCDS" id="CCDS17192.1"/>
<dbReference type="RefSeq" id="NP_056545.3">
    <property type="nucleotide sequence ID" value="NM_015730.5"/>
</dbReference>
<dbReference type="EMDB" id="EMD-19419"/>
<dbReference type="EMDB" id="EMD-19420"/>
<dbReference type="SMR" id="O70174"/>
<dbReference type="BioGRID" id="197932">
    <property type="interactions" value="8"/>
</dbReference>
<dbReference type="ComplexPortal" id="CPX-167">
    <property type="entry name" value="Neuronal nicotinic acetylcholine receptor complex, 3xalpha4-2xbeta2"/>
</dbReference>
<dbReference type="ComplexPortal" id="CPX-169">
    <property type="entry name" value="Neuronal nicotinic acetylcholine receptor complex, 2xalpha4-3xbeta2"/>
</dbReference>
<dbReference type="ComplexPortal" id="CPX-216">
    <property type="entry name" value="Neuronal nicotinic acetylcholine receptor complex, alpha4-alpha5-beta2"/>
</dbReference>
<dbReference type="ComplexPortal" id="CPX-220">
    <property type="entry name" value="Neuronal nicotinic acetylcholine receptor complex, alpha4-beta4"/>
</dbReference>
<dbReference type="DIP" id="DIP-48731N"/>
<dbReference type="FunCoup" id="O70174">
    <property type="interactions" value="484"/>
</dbReference>
<dbReference type="IntAct" id="O70174">
    <property type="interactions" value="6"/>
</dbReference>
<dbReference type="STRING" id="10090.ENSMUSP00000066338"/>
<dbReference type="BindingDB" id="O70174"/>
<dbReference type="ChEMBL" id="CHEMBL4457"/>
<dbReference type="DrugCentral" id="O70174"/>
<dbReference type="GlyCosmos" id="O70174">
    <property type="glycosylation" value="3 sites, No reported glycans"/>
</dbReference>
<dbReference type="GlyGen" id="O70174">
    <property type="glycosylation" value="3 sites, 3 N-linked glycans (3 sites)"/>
</dbReference>
<dbReference type="iPTMnet" id="O70174"/>
<dbReference type="PhosphoSitePlus" id="O70174"/>
<dbReference type="PaxDb" id="10090-ENSMUSP00000066338"/>
<dbReference type="ProteomicsDB" id="285540"/>
<dbReference type="Antibodypedia" id="29717">
    <property type="antibodies" value="287 antibodies from 33 providers"/>
</dbReference>
<dbReference type="DNASU" id="11438"/>
<dbReference type="Ensembl" id="ENSMUST00000067120.14">
    <property type="protein sequence ID" value="ENSMUSP00000066338.8"/>
    <property type="gene ID" value="ENSMUSG00000027577.15"/>
</dbReference>
<dbReference type="GeneID" id="11438"/>
<dbReference type="KEGG" id="mmu:11438"/>
<dbReference type="UCSC" id="uc008okq.1">
    <property type="organism name" value="mouse"/>
</dbReference>
<dbReference type="AGR" id="MGI:87888"/>
<dbReference type="CTD" id="1137"/>
<dbReference type="MGI" id="MGI:87888">
    <property type="gene designation" value="Chrna4"/>
</dbReference>
<dbReference type="VEuPathDB" id="HostDB:ENSMUSG00000027577"/>
<dbReference type="eggNOG" id="KOG3645">
    <property type="taxonomic scope" value="Eukaryota"/>
</dbReference>
<dbReference type="GeneTree" id="ENSGT00940000159329"/>
<dbReference type="HOGENOM" id="CLU_018074_1_1_1"/>
<dbReference type="InParanoid" id="O70174"/>
<dbReference type="OMA" id="HCRRLIE"/>
<dbReference type="OrthoDB" id="24508at9989"/>
<dbReference type="PhylomeDB" id="O70174"/>
<dbReference type="TreeFam" id="TF315605"/>
<dbReference type="Reactome" id="R-MMU-629587">
    <property type="pathway name" value="Highly sodium permeable postsynaptic acetylcholine nicotinic receptors"/>
</dbReference>
<dbReference type="Reactome" id="R-MMU-629594">
    <property type="pathway name" value="Highly calcium permeable postsynaptic nicotinic acetylcholine receptors"/>
</dbReference>
<dbReference type="Reactome" id="R-MMU-629597">
    <property type="pathway name" value="Highly calcium permeable nicotinic acetylcholine receptors"/>
</dbReference>
<dbReference type="BioGRID-ORCS" id="11438">
    <property type="hits" value="1 hit in 112 CRISPR screens"/>
</dbReference>
<dbReference type="ChiTaRS" id="Chrna4">
    <property type="organism name" value="mouse"/>
</dbReference>
<dbReference type="PRO" id="PR:O70174"/>
<dbReference type="Proteomes" id="UP000000589">
    <property type="component" value="Chromosome 2"/>
</dbReference>
<dbReference type="RNAct" id="O70174">
    <property type="molecule type" value="protein"/>
</dbReference>
<dbReference type="Bgee" id="ENSMUSG00000027577">
    <property type="expression patterns" value="Expressed in lumbar subsegment of spinal cord and 109 other cell types or tissues"/>
</dbReference>
<dbReference type="ExpressionAtlas" id="O70174">
    <property type="expression patterns" value="baseline and differential"/>
</dbReference>
<dbReference type="GO" id="GO:0005892">
    <property type="term" value="C:acetylcholine-gated channel complex"/>
    <property type="evidence" value="ECO:0000314"/>
    <property type="project" value="MGI"/>
</dbReference>
<dbReference type="GO" id="GO:0098691">
    <property type="term" value="C:dopaminergic synapse"/>
    <property type="evidence" value="ECO:0000314"/>
    <property type="project" value="SynGO"/>
</dbReference>
<dbReference type="GO" id="GO:0009897">
    <property type="term" value="C:external side of plasma membrane"/>
    <property type="evidence" value="ECO:0000314"/>
    <property type="project" value="MGI"/>
</dbReference>
<dbReference type="GO" id="GO:0016020">
    <property type="term" value="C:membrane"/>
    <property type="evidence" value="ECO:0000314"/>
    <property type="project" value="MGI"/>
</dbReference>
<dbReference type="GO" id="GO:0005886">
    <property type="term" value="C:plasma membrane"/>
    <property type="evidence" value="ECO:0000314"/>
    <property type="project" value="MGI"/>
</dbReference>
<dbReference type="GO" id="GO:0045211">
    <property type="term" value="C:postsynaptic membrane"/>
    <property type="evidence" value="ECO:0007669"/>
    <property type="project" value="UniProtKB-KW"/>
</dbReference>
<dbReference type="GO" id="GO:0042734">
    <property type="term" value="C:presynaptic membrane"/>
    <property type="evidence" value="ECO:0000314"/>
    <property type="project" value="SynGO"/>
</dbReference>
<dbReference type="GO" id="GO:0022848">
    <property type="term" value="F:acetylcholine-gated monoatomic cation-selective channel activity"/>
    <property type="evidence" value="ECO:0000315"/>
    <property type="project" value="MGI"/>
</dbReference>
<dbReference type="GO" id="GO:0005216">
    <property type="term" value="F:monoatomic ion channel activity"/>
    <property type="evidence" value="ECO:0000314"/>
    <property type="project" value="MGI"/>
</dbReference>
<dbReference type="GO" id="GO:0004888">
    <property type="term" value="F:transmembrane signaling receptor activity"/>
    <property type="evidence" value="ECO:0007669"/>
    <property type="project" value="InterPro"/>
</dbReference>
<dbReference type="GO" id="GO:0095500">
    <property type="term" value="P:acetylcholine receptor signaling pathway"/>
    <property type="evidence" value="ECO:0000314"/>
    <property type="project" value="MGI"/>
</dbReference>
<dbReference type="GO" id="GO:0042113">
    <property type="term" value="P:B cell activation"/>
    <property type="evidence" value="ECO:0000315"/>
    <property type="project" value="MGI"/>
</dbReference>
<dbReference type="GO" id="GO:0035095">
    <property type="term" value="P:behavioral response to nicotine"/>
    <property type="evidence" value="ECO:0000315"/>
    <property type="project" value="MGI"/>
</dbReference>
<dbReference type="GO" id="GO:0006816">
    <property type="term" value="P:calcium ion transport"/>
    <property type="evidence" value="ECO:0000316"/>
    <property type="project" value="MGI"/>
</dbReference>
<dbReference type="GO" id="GO:0035640">
    <property type="term" value="P:exploration behavior"/>
    <property type="evidence" value="ECO:0000315"/>
    <property type="project" value="MGI"/>
</dbReference>
<dbReference type="GO" id="GO:0060080">
    <property type="term" value="P:inhibitory postsynaptic potential"/>
    <property type="evidence" value="ECO:0000315"/>
    <property type="project" value="MGI"/>
</dbReference>
<dbReference type="GO" id="GO:0007626">
    <property type="term" value="P:locomotory behavior"/>
    <property type="evidence" value="ECO:0000315"/>
    <property type="project" value="MGI"/>
</dbReference>
<dbReference type="GO" id="GO:0051899">
    <property type="term" value="P:membrane depolarization"/>
    <property type="evidence" value="ECO:0000315"/>
    <property type="project" value="MGI"/>
</dbReference>
<dbReference type="GO" id="GO:0050877">
    <property type="term" value="P:nervous system process"/>
    <property type="evidence" value="ECO:0000315"/>
    <property type="project" value="MGI"/>
</dbReference>
<dbReference type="GO" id="GO:0019228">
    <property type="term" value="P:neuronal action potential"/>
    <property type="evidence" value="ECO:0000315"/>
    <property type="project" value="MGI"/>
</dbReference>
<dbReference type="GO" id="GO:0099171">
    <property type="term" value="P:presynaptic modulation of chemical synaptic transmission"/>
    <property type="evidence" value="ECO:0000314"/>
    <property type="project" value="SynGO"/>
</dbReference>
<dbReference type="GO" id="GO:0014059">
    <property type="term" value="P:regulation of dopamine secretion"/>
    <property type="evidence" value="ECO:0000315"/>
    <property type="project" value="MGI"/>
</dbReference>
<dbReference type="GO" id="GO:0042391">
    <property type="term" value="P:regulation of membrane potential"/>
    <property type="evidence" value="ECO:0000316"/>
    <property type="project" value="MGI"/>
</dbReference>
<dbReference type="GO" id="GO:0007585">
    <property type="term" value="P:respiratory gaseous exchange by respiratory system"/>
    <property type="evidence" value="ECO:0000315"/>
    <property type="project" value="MGI"/>
</dbReference>
<dbReference type="GO" id="GO:0035094">
    <property type="term" value="P:response to nicotine"/>
    <property type="evidence" value="ECO:0000314"/>
    <property type="project" value="MGI"/>
</dbReference>
<dbReference type="GO" id="GO:0019233">
    <property type="term" value="P:sensory perception of pain"/>
    <property type="evidence" value="ECO:0000315"/>
    <property type="project" value="MGI"/>
</dbReference>
<dbReference type="GO" id="GO:0007271">
    <property type="term" value="P:synaptic transmission, cholinergic"/>
    <property type="evidence" value="ECO:0000314"/>
    <property type="project" value="MGI"/>
</dbReference>
<dbReference type="CDD" id="cd19064">
    <property type="entry name" value="LGIC_TM_nAChR"/>
    <property type="match status" value="1"/>
</dbReference>
<dbReference type="FunFam" id="1.20.58.390:FF:000014">
    <property type="entry name" value="Neuronal nicotinic acetylcholine receptor alpha4 subunit"/>
    <property type="match status" value="1"/>
</dbReference>
<dbReference type="FunFam" id="2.70.170.10:FF:000005">
    <property type="entry name" value="Neuronal nicotinic acetylcholine receptor alpha4 subunit"/>
    <property type="match status" value="1"/>
</dbReference>
<dbReference type="FunFam" id="1.20.58.390:FF:000001">
    <property type="entry name" value="Neuronal nicotinic acetylcholine receptor subunit 3"/>
    <property type="match status" value="1"/>
</dbReference>
<dbReference type="Gene3D" id="2.70.170.10">
    <property type="entry name" value="Neurotransmitter-gated ion-channel ligand-binding domain"/>
    <property type="match status" value="1"/>
</dbReference>
<dbReference type="Gene3D" id="1.20.58.390">
    <property type="entry name" value="Neurotransmitter-gated ion-channel transmembrane domain"/>
    <property type="match status" value="2"/>
</dbReference>
<dbReference type="InterPro" id="IPR006202">
    <property type="entry name" value="Neur_chan_lig-bd"/>
</dbReference>
<dbReference type="InterPro" id="IPR036734">
    <property type="entry name" value="Neur_chan_lig-bd_sf"/>
</dbReference>
<dbReference type="InterPro" id="IPR006201">
    <property type="entry name" value="Neur_channel"/>
</dbReference>
<dbReference type="InterPro" id="IPR036719">
    <property type="entry name" value="Neuro-gated_channel_TM_sf"/>
</dbReference>
<dbReference type="InterPro" id="IPR038050">
    <property type="entry name" value="Neuro_actylchol_rec"/>
</dbReference>
<dbReference type="InterPro" id="IPR006029">
    <property type="entry name" value="Neurotrans-gated_channel_TM"/>
</dbReference>
<dbReference type="InterPro" id="IPR018000">
    <property type="entry name" value="Neurotransmitter_ion_chnl_CS"/>
</dbReference>
<dbReference type="InterPro" id="IPR002394">
    <property type="entry name" value="Nicotinic_acetylcholine_rcpt"/>
</dbReference>
<dbReference type="NCBIfam" id="TIGR00860">
    <property type="entry name" value="LIC"/>
    <property type="match status" value="1"/>
</dbReference>
<dbReference type="PANTHER" id="PTHR18945">
    <property type="entry name" value="NEUROTRANSMITTER GATED ION CHANNEL"/>
    <property type="match status" value="1"/>
</dbReference>
<dbReference type="Pfam" id="PF02931">
    <property type="entry name" value="Neur_chan_LBD"/>
    <property type="match status" value="1"/>
</dbReference>
<dbReference type="Pfam" id="PF02932">
    <property type="entry name" value="Neur_chan_memb"/>
    <property type="match status" value="1"/>
</dbReference>
<dbReference type="PRINTS" id="PR00254">
    <property type="entry name" value="NICOTINICR"/>
</dbReference>
<dbReference type="PRINTS" id="PR00252">
    <property type="entry name" value="NRIONCHANNEL"/>
</dbReference>
<dbReference type="SUPFAM" id="SSF90112">
    <property type="entry name" value="Neurotransmitter-gated ion-channel transmembrane pore"/>
    <property type="match status" value="1"/>
</dbReference>
<dbReference type="SUPFAM" id="SSF63712">
    <property type="entry name" value="Nicotinic receptor ligand binding domain-like"/>
    <property type="match status" value="1"/>
</dbReference>
<dbReference type="PROSITE" id="PS00236">
    <property type="entry name" value="NEUROTR_ION_CHANNEL"/>
    <property type="match status" value="1"/>
</dbReference>
<protein>
    <recommendedName>
        <fullName>Neuronal acetylcholine receptor subunit alpha-4</fullName>
    </recommendedName>
</protein>
<evidence type="ECO:0000250" key="1">
    <source>
        <dbReference type="UniProtKB" id="P02709"/>
    </source>
</evidence>
<evidence type="ECO:0000250" key="2">
    <source>
        <dbReference type="UniProtKB" id="P04757"/>
    </source>
</evidence>
<evidence type="ECO:0000250" key="3">
    <source>
        <dbReference type="UniProtKB" id="P09483"/>
    </source>
</evidence>
<evidence type="ECO:0000250" key="4">
    <source>
        <dbReference type="UniProtKB" id="P43681"/>
    </source>
</evidence>
<evidence type="ECO:0000255" key="5"/>
<evidence type="ECO:0000256" key="6">
    <source>
        <dbReference type="SAM" id="MobiDB-lite"/>
    </source>
</evidence>
<evidence type="ECO:0000269" key="7">
    <source>
    </source>
</evidence>
<evidence type="ECO:0000269" key="8">
    <source>
    </source>
</evidence>
<evidence type="ECO:0000305" key="9"/>
<evidence type="ECO:0000305" key="10">
    <source>
    </source>
</evidence>
<evidence type="ECO:0007744" key="11">
    <source>
    </source>
</evidence>
<reference key="1">
    <citation type="journal article" date="2001" name="Pharmacogenetics">
        <title>Long sleep and short sleep mice differ in nicotine-stimulated 86Rb+ efflux and alpha4 nicotinic receptor subunit cDNA sequence.</title>
        <authorList>
            <person name="Stitzel J.A."/>
            <person name="Dobelis P."/>
            <person name="Jimenez M."/>
            <person name="Collins A.C."/>
        </authorList>
    </citation>
    <scope>NUCLEOTIDE SEQUENCE [MRNA]</scope>
    <scope>VARIANT ALA-529</scope>
    <source>
        <strain>Long sleep selected line</strain>
    </source>
</reference>
<reference key="2">
    <citation type="journal article" date="2005" name="Science">
        <title>The transcriptional landscape of the mammalian genome.</title>
        <authorList>
            <person name="Carninci P."/>
            <person name="Kasukawa T."/>
            <person name="Katayama S."/>
            <person name="Gough J."/>
            <person name="Frith M.C."/>
            <person name="Maeda N."/>
            <person name="Oyama R."/>
            <person name="Ravasi T."/>
            <person name="Lenhard B."/>
            <person name="Wells C."/>
            <person name="Kodzius R."/>
            <person name="Shimokawa K."/>
            <person name="Bajic V.B."/>
            <person name="Brenner S.E."/>
            <person name="Batalov S."/>
            <person name="Forrest A.R."/>
            <person name="Zavolan M."/>
            <person name="Davis M.J."/>
            <person name="Wilming L.G."/>
            <person name="Aidinis V."/>
            <person name="Allen J.E."/>
            <person name="Ambesi-Impiombato A."/>
            <person name="Apweiler R."/>
            <person name="Aturaliya R.N."/>
            <person name="Bailey T.L."/>
            <person name="Bansal M."/>
            <person name="Baxter L."/>
            <person name="Beisel K.W."/>
            <person name="Bersano T."/>
            <person name="Bono H."/>
            <person name="Chalk A.M."/>
            <person name="Chiu K.P."/>
            <person name="Choudhary V."/>
            <person name="Christoffels A."/>
            <person name="Clutterbuck D.R."/>
            <person name="Crowe M.L."/>
            <person name="Dalla E."/>
            <person name="Dalrymple B.P."/>
            <person name="de Bono B."/>
            <person name="Della Gatta G."/>
            <person name="di Bernardo D."/>
            <person name="Down T."/>
            <person name="Engstrom P."/>
            <person name="Fagiolini M."/>
            <person name="Faulkner G."/>
            <person name="Fletcher C.F."/>
            <person name="Fukushima T."/>
            <person name="Furuno M."/>
            <person name="Futaki S."/>
            <person name="Gariboldi M."/>
            <person name="Georgii-Hemming P."/>
            <person name="Gingeras T.R."/>
            <person name="Gojobori T."/>
            <person name="Green R.E."/>
            <person name="Gustincich S."/>
            <person name="Harbers M."/>
            <person name="Hayashi Y."/>
            <person name="Hensch T.K."/>
            <person name="Hirokawa N."/>
            <person name="Hill D."/>
            <person name="Huminiecki L."/>
            <person name="Iacono M."/>
            <person name="Ikeo K."/>
            <person name="Iwama A."/>
            <person name="Ishikawa T."/>
            <person name="Jakt M."/>
            <person name="Kanapin A."/>
            <person name="Katoh M."/>
            <person name="Kawasawa Y."/>
            <person name="Kelso J."/>
            <person name="Kitamura H."/>
            <person name="Kitano H."/>
            <person name="Kollias G."/>
            <person name="Krishnan S.P."/>
            <person name="Kruger A."/>
            <person name="Kummerfeld S.K."/>
            <person name="Kurochkin I.V."/>
            <person name="Lareau L.F."/>
            <person name="Lazarevic D."/>
            <person name="Lipovich L."/>
            <person name="Liu J."/>
            <person name="Liuni S."/>
            <person name="McWilliam S."/>
            <person name="Madan Babu M."/>
            <person name="Madera M."/>
            <person name="Marchionni L."/>
            <person name="Matsuda H."/>
            <person name="Matsuzawa S."/>
            <person name="Miki H."/>
            <person name="Mignone F."/>
            <person name="Miyake S."/>
            <person name="Morris K."/>
            <person name="Mottagui-Tabar S."/>
            <person name="Mulder N."/>
            <person name="Nakano N."/>
            <person name="Nakauchi H."/>
            <person name="Ng P."/>
            <person name="Nilsson R."/>
            <person name="Nishiguchi S."/>
            <person name="Nishikawa S."/>
            <person name="Nori F."/>
            <person name="Ohara O."/>
            <person name="Okazaki Y."/>
            <person name="Orlando V."/>
            <person name="Pang K.C."/>
            <person name="Pavan W.J."/>
            <person name="Pavesi G."/>
            <person name="Pesole G."/>
            <person name="Petrovsky N."/>
            <person name="Piazza S."/>
            <person name="Reed J."/>
            <person name="Reid J.F."/>
            <person name="Ring B.Z."/>
            <person name="Ringwald M."/>
            <person name="Rost B."/>
            <person name="Ruan Y."/>
            <person name="Salzberg S.L."/>
            <person name="Sandelin A."/>
            <person name="Schneider C."/>
            <person name="Schoenbach C."/>
            <person name="Sekiguchi K."/>
            <person name="Semple C.A."/>
            <person name="Seno S."/>
            <person name="Sessa L."/>
            <person name="Sheng Y."/>
            <person name="Shibata Y."/>
            <person name="Shimada H."/>
            <person name="Shimada K."/>
            <person name="Silva D."/>
            <person name="Sinclair B."/>
            <person name="Sperling S."/>
            <person name="Stupka E."/>
            <person name="Sugiura K."/>
            <person name="Sultana R."/>
            <person name="Takenaka Y."/>
            <person name="Taki K."/>
            <person name="Tammoja K."/>
            <person name="Tan S.L."/>
            <person name="Tang S."/>
            <person name="Taylor M.S."/>
            <person name="Tegner J."/>
            <person name="Teichmann S.A."/>
            <person name="Ueda H.R."/>
            <person name="van Nimwegen E."/>
            <person name="Verardo R."/>
            <person name="Wei C.L."/>
            <person name="Yagi K."/>
            <person name="Yamanishi H."/>
            <person name="Zabarovsky E."/>
            <person name="Zhu S."/>
            <person name="Zimmer A."/>
            <person name="Hide W."/>
            <person name="Bult C."/>
            <person name="Grimmond S.M."/>
            <person name="Teasdale R.D."/>
            <person name="Liu E.T."/>
            <person name="Brusic V."/>
            <person name="Quackenbush J."/>
            <person name="Wahlestedt C."/>
            <person name="Mattick J.S."/>
            <person name="Hume D.A."/>
            <person name="Kai C."/>
            <person name="Sasaki D."/>
            <person name="Tomaru Y."/>
            <person name="Fukuda S."/>
            <person name="Kanamori-Katayama M."/>
            <person name="Suzuki M."/>
            <person name="Aoki J."/>
            <person name="Arakawa T."/>
            <person name="Iida J."/>
            <person name="Imamura K."/>
            <person name="Itoh M."/>
            <person name="Kato T."/>
            <person name="Kawaji H."/>
            <person name="Kawagashira N."/>
            <person name="Kawashima T."/>
            <person name="Kojima M."/>
            <person name="Kondo S."/>
            <person name="Konno H."/>
            <person name="Nakano K."/>
            <person name="Ninomiya N."/>
            <person name="Nishio T."/>
            <person name="Okada M."/>
            <person name="Plessy C."/>
            <person name="Shibata K."/>
            <person name="Shiraki T."/>
            <person name="Suzuki S."/>
            <person name="Tagami M."/>
            <person name="Waki K."/>
            <person name="Watahiki A."/>
            <person name="Okamura-Oho Y."/>
            <person name="Suzuki H."/>
            <person name="Kawai J."/>
            <person name="Hayashizaki Y."/>
        </authorList>
    </citation>
    <scope>NUCLEOTIDE SEQUENCE [LARGE SCALE MRNA]</scope>
    <source>
        <strain>C57BL/6J</strain>
        <tissue>Diencephalon</tissue>
        <tissue>Hippocampus</tissue>
    </source>
</reference>
<reference key="3">
    <citation type="journal article" date="2004" name="Genome Res.">
        <title>The status, quality, and expansion of the NIH full-length cDNA project: the Mammalian Gene Collection (MGC).</title>
        <authorList>
            <consortium name="The MGC Project Team"/>
        </authorList>
    </citation>
    <scope>NUCLEOTIDE SEQUENCE [LARGE SCALE MRNA]</scope>
    <source>
        <strain>C57BL/6J</strain>
        <tissue>Brain</tissue>
    </source>
</reference>
<reference key="4">
    <citation type="journal article" date="1998" name="Eur. J. Neurosci.">
        <title>Promoter analysis of the neuronal nicotinic acetylcholine receptor alpha4 gene: methylation and expression of the transgene.</title>
        <authorList>
            <person name="Watanabe H."/>
            <person name="Zoli M."/>
            <person name="Changeux J.-P."/>
        </authorList>
    </citation>
    <scope>NUCLEOTIDE SEQUENCE [GENOMIC DNA] OF 1-27</scope>
</reference>
<reference key="5">
    <citation type="submission" date="2000-12" db="EMBL/GenBank/DDBJ databases">
        <title>Expression of mouse nicotinic acetylcholine receptor genes in the developing thymus.</title>
        <authorList>
            <person name="Kuo Y.-P."/>
            <person name="Lukas R.J."/>
        </authorList>
    </citation>
    <scope>NUCLEOTIDE SEQUENCE [MRNA] OF 118-357</scope>
    <source>
        <strain>C57BL/6J</strain>
    </source>
</reference>
<reference key="6">
    <citation type="journal article" date="2010" name="Cell">
        <title>A tissue-specific atlas of mouse protein phosphorylation and expression.</title>
        <authorList>
            <person name="Huttlin E.L."/>
            <person name="Jedrychowski M.P."/>
            <person name="Elias J.E."/>
            <person name="Goswami T."/>
            <person name="Rad R."/>
            <person name="Beausoleil S.A."/>
            <person name="Villen J."/>
            <person name="Haas W."/>
            <person name="Sowa M.E."/>
            <person name="Gygi S.P."/>
        </authorList>
    </citation>
    <scope>PHOSPHORYLATION [LARGE SCALE ANALYSIS] AT SER-540 AND SER-543</scope>
    <scope>IDENTIFICATION BY MASS SPECTROMETRY [LARGE SCALE ANALYSIS]</scope>
    <source>
        <tissue>Brain</tissue>
    </source>
</reference>
<reference key="7">
    <citation type="journal article" date="2003" name="J. Neurosci.">
        <title>Subunit composition of functional nicotinic receptors in dopaminergic neurons investigated with knock-out mice.</title>
        <authorList>
            <person name="Champtiaux N."/>
            <person name="Gotti C."/>
            <person name="Cordero-Erausquin M."/>
            <person name="David D.J."/>
            <person name="Przybylski C."/>
            <person name="Lena C."/>
            <person name="Clementi F."/>
            <person name="Moretti M."/>
            <person name="Rossi F.M."/>
            <person name="Le Novere N."/>
            <person name="McIntosh J.M."/>
            <person name="Gardier A.M."/>
            <person name="Changeux J.P."/>
        </authorList>
    </citation>
    <scope>FUNCTION</scope>
    <scope>SUBUNIT</scope>
    <scope>ACTIVITY REGULATION</scope>
    <scope>SUBCELLULAR LOCATION</scope>
</reference>
<keyword id="KW-0106">Calcium</keyword>
<keyword id="KW-1003">Cell membrane</keyword>
<keyword id="KW-1015">Disulfide bond</keyword>
<keyword id="KW-0325">Glycoprotein</keyword>
<keyword id="KW-0407">Ion channel</keyword>
<keyword id="KW-0406">Ion transport</keyword>
<keyword id="KW-1071">Ligand-gated ion channel</keyword>
<keyword id="KW-0449">Lipoprotein</keyword>
<keyword id="KW-0472">Membrane</keyword>
<keyword id="KW-0479">Metal-binding</keyword>
<keyword id="KW-0564">Palmitate</keyword>
<keyword id="KW-0597">Phosphoprotein</keyword>
<keyword id="KW-0675">Receptor</keyword>
<keyword id="KW-1185">Reference proteome</keyword>
<keyword id="KW-0732">Signal</keyword>
<keyword id="KW-0770">Synapse</keyword>
<keyword id="KW-0812">Transmembrane</keyword>
<keyword id="KW-1133">Transmembrane helix</keyword>
<keyword id="KW-0813">Transport</keyword>